<comment type="function">
    <text evidence="1">Catalyzes the transfer of the diacylglyceryl group from phosphatidylglycerol to the sulfhydryl group of the N-terminal cysteine of a prolipoprotein, the first step in the formation of mature lipoproteins.</text>
</comment>
<comment type="catalytic activity">
    <reaction evidence="1">
        <text>L-cysteinyl-[prolipoprotein] + a 1,2-diacyl-sn-glycero-3-phospho-(1'-sn-glycerol) = an S-1,2-diacyl-sn-glyceryl-L-cysteinyl-[prolipoprotein] + sn-glycerol 1-phosphate + H(+)</text>
        <dbReference type="Rhea" id="RHEA:56712"/>
        <dbReference type="Rhea" id="RHEA-COMP:14679"/>
        <dbReference type="Rhea" id="RHEA-COMP:14680"/>
        <dbReference type="ChEBI" id="CHEBI:15378"/>
        <dbReference type="ChEBI" id="CHEBI:29950"/>
        <dbReference type="ChEBI" id="CHEBI:57685"/>
        <dbReference type="ChEBI" id="CHEBI:64716"/>
        <dbReference type="ChEBI" id="CHEBI:140658"/>
        <dbReference type="EC" id="2.5.1.145"/>
    </reaction>
</comment>
<comment type="pathway">
    <text evidence="1">Protein modification; lipoprotein biosynthesis (diacylglyceryl transfer).</text>
</comment>
<comment type="subcellular location">
    <subcellularLocation>
        <location evidence="1">Cell membrane</location>
        <topology evidence="1">Multi-pass membrane protein</topology>
    </subcellularLocation>
</comment>
<comment type="similarity">
    <text evidence="1">Belongs to the Lgt family.</text>
</comment>
<organism>
    <name type="scientific">Streptococcus pyogenes serotype M28 (strain MGAS6180)</name>
    <dbReference type="NCBI Taxonomy" id="319701"/>
    <lineage>
        <taxon>Bacteria</taxon>
        <taxon>Bacillati</taxon>
        <taxon>Bacillota</taxon>
        <taxon>Bacilli</taxon>
        <taxon>Lactobacillales</taxon>
        <taxon>Streptococcaceae</taxon>
        <taxon>Streptococcus</taxon>
    </lineage>
</organism>
<dbReference type="EC" id="2.5.1.145" evidence="1"/>
<dbReference type="EMBL" id="CP000056">
    <property type="protein sequence ID" value="AAX71580.1"/>
    <property type="molecule type" value="Genomic_DNA"/>
</dbReference>
<dbReference type="RefSeq" id="WP_002990577.1">
    <property type="nucleotide sequence ID" value="NC_007296.2"/>
</dbReference>
<dbReference type="SMR" id="Q48UM6"/>
<dbReference type="GeneID" id="69901201"/>
<dbReference type="KEGG" id="spb:M28_Spy0466"/>
<dbReference type="HOGENOM" id="CLU_013386_0_1_9"/>
<dbReference type="UniPathway" id="UPA00664"/>
<dbReference type="GO" id="GO:0005886">
    <property type="term" value="C:plasma membrane"/>
    <property type="evidence" value="ECO:0007669"/>
    <property type="project" value="UniProtKB-SubCell"/>
</dbReference>
<dbReference type="GO" id="GO:0008961">
    <property type="term" value="F:phosphatidylglycerol-prolipoprotein diacylglyceryl transferase activity"/>
    <property type="evidence" value="ECO:0007669"/>
    <property type="project" value="UniProtKB-UniRule"/>
</dbReference>
<dbReference type="GO" id="GO:0042158">
    <property type="term" value="P:lipoprotein biosynthetic process"/>
    <property type="evidence" value="ECO:0007669"/>
    <property type="project" value="UniProtKB-UniRule"/>
</dbReference>
<dbReference type="HAMAP" id="MF_01147">
    <property type="entry name" value="Lgt"/>
    <property type="match status" value="1"/>
</dbReference>
<dbReference type="InterPro" id="IPR001640">
    <property type="entry name" value="Lgt"/>
</dbReference>
<dbReference type="NCBIfam" id="TIGR00544">
    <property type="entry name" value="lgt"/>
    <property type="match status" value="1"/>
</dbReference>
<dbReference type="PANTHER" id="PTHR30589:SF0">
    <property type="entry name" value="PHOSPHATIDYLGLYCEROL--PROLIPOPROTEIN DIACYLGLYCERYL TRANSFERASE"/>
    <property type="match status" value="1"/>
</dbReference>
<dbReference type="PANTHER" id="PTHR30589">
    <property type="entry name" value="PROLIPOPROTEIN DIACYLGLYCERYL TRANSFERASE"/>
    <property type="match status" value="1"/>
</dbReference>
<dbReference type="Pfam" id="PF01790">
    <property type="entry name" value="LGT"/>
    <property type="match status" value="1"/>
</dbReference>
<dbReference type="PROSITE" id="PS01311">
    <property type="entry name" value="LGT"/>
    <property type="match status" value="1"/>
</dbReference>
<keyword id="KW-1003">Cell membrane</keyword>
<keyword id="KW-0472">Membrane</keyword>
<keyword id="KW-0808">Transferase</keyword>
<keyword id="KW-0812">Transmembrane</keyword>
<keyword id="KW-1133">Transmembrane helix</keyword>
<feature type="chain" id="PRO_1000053515" description="Phosphatidylglycerol--prolipoprotein diacylglyceryl transferase">
    <location>
        <begin position="1"/>
        <end position="259"/>
    </location>
</feature>
<feature type="transmembrane region" description="Helical" evidence="1">
    <location>
        <begin position="12"/>
        <end position="32"/>
    </location>
</feature>
<feature type="transmembrane region" description="Helical" evidence="1">
    <location>
        <begin position="41"/>
        <end position="61"/>
    </location>
</feature>
<feature type="transmembrane region" description="Helical" evidence="1">
    <location>
        <begin position="80"/>
        <end position="100"/>
    </location>
</feature>
<feature type="transmembrane region" description="Helical" evidence="1">
    <location>
        <begin position="109"/>
        <end position="129"/>
    </location>
</feature>
<feature type="transmembrane region" description="Helical" evidence="1">
    <location>
        <begin position="167"/>
        <end position="187"/>
    </location>
</feature>
<feature type="transmembrane region" description="Helical" evidence="1">
    <location>
        <begin position="194"/>
        <end position="214"/>
    </location>
</feature>
<feature type="transmembrane region" description="Helical" evidence="1">
    <location>
        <begin position="226"/>
        <end position="246"/>
    </location>
</feature>
<feature type="binding site" evidence="1">
    <location>
        <position position="131"/>
    </location>
    <ligand>
        <name>a 1,2-diacyl-sn-glycero-3-phospho-(1'-sn-glycerol)</name>
        <dbReference type="ChEBI" id="CHEBI:64716"/>
    </ligand>
</feature>
<protein>
    <recommendedName>
        <fullName evidence="1">Phosphatidylglycerol--prolipoprotein diacylglyceryl transferase</fullName>
        <ecNumber evidence="1">2.5.1.145</ecNumber>
    </recommendedName>
</protein>
<name>LGT_STRPM</name>
<gene>
    <name evidence="1" type="primary">lgt</name>
    <name type="ordered locus">M28_Spy0466</name>
</gene>
<proteinExistence type="inferred from homology"/>
<accession>Q48UM6</accession>
<sequence length="259" mass="29420">MINPIALKCGPLAIHWYALCILSGLVLAVYLASKEAPKKGISSDAIFDFILIAFPLAIVGARIYYVIFEWSYYVKHLDEIIAIWNGGIAIYGGLITGALVLLAYCYNKVLNPIHFLDIAAPSVMVAQAIGRWGNFINQEAYGKAVSQLNYLPSFIQKQMFIEGSYRIPTFLYESLWNLLGFVIIMMWRRKPKSLLDGEIFAFYLIWYGSGRLVIEGMRTDSLMFLGIRISQYVSALLIIIGLIFVIKRRRQKGISYYQE</sequence>
<evidence type="ECO:0000255" key="1">
    <source>
        <dbReference type="HAMAP-Rule" id="MF_01147"/>
    </source>
</evidence>
<reference key="1">
    <citation type="journal article" date="2005" name="J. Infect. Dis.">
        <title>Genome sequence of a serotype M28 strain of group A Streptococcus: potential new insights into puerperal sepsis and bacterial disease specificity.</title>
        <authorList>
            <person name="Green N.M."/>
            <person name="Zhang S."/>
            <person name="Porcella S.F."/>
            <person name="Nagiec M.J."/>
            <person name="Barbian K.D."/>
            <person name="Beres S.B."/>
            <person name="Lefebvre R.B."/>
            <person name="Musser J.M."/>
        </authorList>
    </citation>
    <scope>NUCLEOTIDE SEQUENCE [LARGE SCALE GENOMIC DNA]</scope>
    <source>
        <strain>MGAS6180</strain>
    </source>
</reference>